<comment type="function">
    <text evidence="1">Involved in the binding of tRNA to the ribosomes.</text>
</comment>
<comment type="subunit">
    <text evidence="1">Part of the 30S ribosomal subunit.</text>
</comment>
<comment type="similarity">
    <text evidence="1">Belongs to the universal ribosomal protein uS10 family.</text>
</comment>
<name>RS10_STRPN</name>
<proteinExistence type="inferred from homology"/>
<dbReference type="EMBL" id="AE005672">
    <property type="protein sequence ID" value="AAK74388.1"/>
    <property type="molecule type" value="Genomic_DNA"/>
</dbReference>
<dbReference type="PIR" id="C95024">
    <property type="entry name" value="C95024"/>
</dbReference>
<dbReference type="RefSeq" id="WP_001284513.1">
    <property type="nucleotide sequence ID" value="NZ_CP155539.1"/>
</dbReference>
<dbReference type="SMR" id="P66339"/>
<dbReference type="PaxDb" id="170187-SP_0208"/>
<dbReference type="EnsemblBacteria" id="AAK74388">
    <property type="protein sequence ID" value="AAK74388"/>
    <property type="gene ID" value="SP_0208"/>
</dbReference>
<dbReference type="GeneID" id="93738956"/>
<dbReference type="KEGG" id="spn:SP_0208"/>
<dbReference type="eggNOG" id="COG0051">
    <property type="taxonomic scope" value="Bacteria"/>
</dbReference>
<dbReference type="PhylomeDB" id="P66339"/>
<dbReference type="BioCyc" id="SPNE170187:G1FZB-213-MONOMER"/>
<dbReference type="Proteomes" id="UP000000585">
    <property type="component" value="Chromosome"/>
</dbReference>
<dbReference type="GO" id="GO:1990904">
    <property type="term" value="C:ribonucleoprotein complex"/>
    <property type="evidence" value="ECO:0007669"/>
    <property type="project" value="UniProtKB-KW"/>
</dbReference>
<dbReference type="GO" id="GO:0005840">
    <property type="term" value="C:ribosome"/>
    <property type="evidence" value="ECO:0007669"/>
    <property type="project" value="UniProtKB-KW"/>
</dbReference>
<dbReference type="GO" id="GO:0003735">
    <property type="term" value="F:structural constituent of ribosome"/>
    <property type="evidence" value="ECO:0007669"/>
    <property type="project" value="InterPro"/>
</dbReference>
<dbReference type="GO" id="GO:0000049">
    <property type="term" value="F:tRNA binding"/>
    <property type="evidence" value="ECO:0007669"/>
    <property type="project" value="UniProtKB-UniRule"/>
</dbReference>
<dbReference type="GO" id="GO:0006412">
    <property type="term" value="P:translation"/>
    <property type="evidence" value="ECO:0007669"/>
    <property type="project" value="UniProtKB-UniRule"/>
</dbReference>
<dbReference type="FunFam" id="3.30.70.600:FF:000001">
    <property type="entry name" value="30S ribosomal protein S10"/>
    <property type="match status" value="1"/>
</dbReference>
<dbReference type="Gene3D" id="3.30.70.600">
    <property type="entry name" value="Ribosomal protein S10 domain"/>
    <property type="match status" value="1"/>
</dbReference>
<dbReference type="HAMAP" id="MF_00508">
    <property type="entry name" value="Ribosomal_uS10"/>
    <property type="match status" value="1"/>
</dbReference>
<dbReference type="InterPro" id="IPR001848">
    <property type="entry name" value="Ribosomal_uS10"/>
</dbReference>
<dbReference type="InterPro" id="IPR018268">
    <property type="entry name" value="Ribosomal_uS10_CS"/>
</dbReference>
<dbReference type="InterPro" id="IPR027486">
    <property type="entry name" value="Ribosomal_uS10_dom"/>
</dbReference>
<dbReference type="InterPro" id="IPR036838">
    <property type="entry name" value="Ribosomal_uS10_dom_sf"/>
</dbReference>
<dbReference type="NCBIfam" id="NF001861">
    <property type="entry name" value="PRK00596.1"/>
    <property type="match status" value="1"/>
</dbReference>
<dbReference type="NCBIfam" id="TIGR01049">
    <property type="entry name" value="rpsJ_bact"/>
    <property type="match status" value="1"/>
</dbReference>
<dbReference type="PANTHER" id="PTHR11700">
    <property type="entry name" value="30S RIBOSOMAL PROTEIN S10 FAMILY MEMBER"/>
    <property type="match status" value="1"/>
</dbReference>
<dbReference type="Pfam" id="PF00338">
    <property type="entry name" value="Ribosomal_S10"/>
    <property type="match status" value="1"/>
</dbReference>
<dbReference type="PRINTS" id="PR00971">
    <property type="entry name" value="RIBOSOMALS10"/>
</dbReference>
<dbReference type="SMART" id="SM01403">
    <property type="entry name" value="Ribosomal_S10"/>
    <property type="match status" value="1"/>
</dbReference>
<dbReference type="SUPFAM" id="SSF54999">
    <property type="entry name" value="Ribosomal protein S10"/>
    <property type="match status" value="1"/>
</dbReference>
<dbReference type="PROSITE" id="PS00361">
    <property type="entry name" value="RIBOSOMAL_S10"/>
    <property type="match status" value="1"/>
</dbReference>
<protein>
    <recommendedName>
        <fullName evidence="1">Small ribosomal subunit protein uS10</fullName>
    </recommendedName>
    <alternativeName>
        <fullName evidence="2">30S ribosomal protein S10</fullName>
    </alternativeName>
</protein>
<sequence>MANKKIRIRLKAYEHRTLDTAAAKIVESATRTGAQVAGPIPLPTERSLYTIIRATHKYKDSREQFEMRTHKRLIDIVNPTQKTVDALMKLDLPSGVNVEIKL</sequence>
<feature type="chain" id="PRO_0000146607" description="Small ribosomal subunit protein uS10">
    <location>
        <begin position="1"/>
        <end position="102"/>
    </location>
</feature>
<organism>
    <name type="scientific">Streptococcus pneumoniae serotype 4 (strain ATCC BAA-334 / TIGR4)</name>
    <dbReference type="NCBI Taxonomy" id="170187"/>
    <lineage>
        <taxon>Bacteria</taxon>
        <taxon>Bacillati</taxon>
        <taxon>Bacillota</taxon>
        <taxon>Bacilli</taxon>
        <taxon>Lactobacillales</taxon>
        <taxon>Streptococcaceae</taxon>
        <taxon>Streptococcus</taxon>
    </lineage>
</organism>
<reference key="1">
    <citation type="journal article" date="2001" name="Science">
        <title>Complete genome sequence of a virulent isolate of Streptococcus pneumoniae.</title>
        <authorList>
            <person name="Tettelin H."/>
            <person name="Nelson K.E."/>
            <person name="Paulsen I.T."/>
            <person name="Eisen J.A."/>
            <person name="Read T.D."/>
            <person name="Peterson S.N."/>
            <person name="Heidelberg J.F."/>
            <person name="DeBoy R.T."/>
            <person name="Haft D.H."/>
            <person name="Dodson R.J."/>
            <person name="Durkin A.S."/>
            <person name="Gwinn M.L."/>
            <person name="Kolonay J.F."/>
            <person name="Nelson W.C."/>
            <person name="Peterson J.D."/>
            <person name="Umayam L.A."/>
            <person name="White O."/>
            <person name="Salzberg S.L."/>
            <person name="Lewis M.R."/>
            <person name="Radune D."/>
            <person name="Holtzapple E.K."/>
            <person name="Khouri H.M."/>
            <person name="Wolf A.M."/>
            <person name="Utterback T.R."/>
            <person name="Hansen C.L."/>
            <person name="McDonald L.A."/>
            <person name="Feldblyum T.V."/>
            <person name="Angiuoli S.V."/>
            <person name="Dickinson T."/>
            <person name="Hickey E.K."/>
            <person name="Holt I.E."/>
            <person name="Loftus B.J."/>
            <person name="Yang F."/>
            <person name="Smith H.O."/>
            <person name="Venter J.C."/>
            <person name="Dougherty B.A."/>
            <person name="Morrison D.A."/>
            <person name="Hollingshead S.K."/>
            <person name="Fraser C.M."/>
        </authorList>
    </citation>
    <scope>NUCLEOTIDE SEQUENCE [LARGE SCALE GENOMIC DNA]</scope>
    <source>
        <strain>ATCC BAA-334 / TIGR4</strain>
    </source>
</reference>
<accession>P66339</accession>
<accession>Q97SV6</accession>
<gene>
    <name evidence="1" type="primary">rpsJ</name>
    <name type="ordered locus">SP_0208</name>
</gene>
<evidence type="ECO:0000255" key="1">
    <source>
        <dbReference type="HAMAP-Rule" id="MF_00508"/>
    </source>
</evidence>
<evidence type="ECO:0000305" key="2"/>
<keyword id="KW-1185">Reference proteome</keyword>
<keyword id="KW-0687">Ribonucleoprotein</keyword>
<keyword id="KW-0689">Ribosomal protein</keyword>